<proteinExistence type="inferred from homology"/>
<protein>
    <recommendedName>
        <fullName evidence="1">Large ribosomal subunit protein uL16</fullName>
    </recommendedName>
    <alternativeName>
        <fullName evidence="3">50S ribosomal protein L16</fullName>
    </alternativeName>
</protein>
<dbReference type="EMBL" id="CP000551">
    <property type="protein sequence ID" value="ABM71041.1"/>
    <property type="molecule type" value="Genomic_DNA"/>
</dbReference>
<dbReference type="RefSeq" id="WP_011819164.1">
    <property type="nucleotide sequence ID" value="NC_008816.1"/>
</dbReference>
<dbReference type="SMR" id="A2BTD0"/>
<dbReference type="STRING" id="146891.A9601_17581"/>
<dbReference type="KEGG" id="pmb:A9601_17581"/>
<dbReference type="eggNOG" id="COG0197">
    <property type="taxonomic scope" value="Bacteria"/>
</dbReference>
<dbReference type="HOGENOM" id="CLU_078858_2_1_3"/>
<dbReference type="OrthoDB" id="9802589at2"/>
<dbReference type="Proteomes" id="UP000002590">
    <property type="component" value="Chromosome"/>
</dbReference>
<dbReference type="GO" id="GO:1990904">
    <property type="term" value="C:ribonucleoprotein complex"/>
    <property type="evidence" value="ECO:0007669"/>
    <property type="project" value="UniProtKB-KW"/>
</dbReference>
<dbReference type="GO" id="GO:0005840">
    <property type="term" value="C:ribosome"/>
    <property type="evidence" value="ECO:0007669"/>
    <property type="project" value="UniProtKB-KW"/>
</dbReference>
<dbReference type="GO" id="GO:0019843">
    <property type="term" value="F:rRNA binding"/>
    <property type="evidence" value="ECO:0007669"/>
    <property type="project" value="UniProtKB-UniRule"/>
</dbReference>
<dbReference type="GO" id="GO:0003735">
    <property type="term" value="F:structural constituent of ribosome"/>
    <property type="evidence" value="ECO:0007669"/>
    <property type="project" value="InterPro"/>
</dbReference>
<dbReference type="GO" id="GO:0000049">
    <property type="term" value="F:tRNA binding"/>
    <property type="evidence" value="ECO:0007669"/>
    <property type="project" value="UniProtKB-KW"/>
</dbReference>
<dbReference type="GO" id="GO:0006412">
    <property type="term" value="P:translation"/>
    <property type="evidence" value="ECO:0007669"/>
    <property type="project" value="UniProtKB-UniRule"/>
</dbReference>
<dbReference type="CDD" id="cd01433">
    <property type="entry name" value="Ribosomal_L16_L10e"/>
    <property type="match status" value="1"/>
</dbReference>
<dbReference type="FunFam" id="3.90.1170.10:FF:000001">
    <property type="entry name" value="50S ribosomal protein L16"/>
    <property type="match status" value="1"/>
</dbReference>
<dbReference type="Gene3D" id="3.90.1170.10">
    <property type="entry name" value="Ribosomal protein L10e/L16"/>
    <property type="match status" value="1"/>
</dbReference>
<dbReference type="HAMAP" id="MF_01342">
    <property type="entry name" value="Ribosomal_uL16"/>
    <property type="match status" value="1"/>
</dbReference>
<dbReference type="InterPro" id="IPR047873">
    <property type="entry name" value="Ribosomal_uL16"/>
</dbReference>
<dbReference type="InterPro" id="IPR000114">
    <property type="entry name" value="Ribosomal_uL16_bact-type"/>
</dbReference>
<dbReference type="InterPro" id="IPR020798">
    <property type="entry name" value="Ribosomal_uL16_CS"/>
</dbReference>
<dbReference type="InterPro" id="IPR016180">
    <property type="entry name" value="Ribosomal_uL16_dom"/>
</dbReference>
<dbReference type="InterPro" id="IPR036920">
    <property type="entry name" value="Ribosomal_uL16_sf"/>
</dbReference>
<dbReference type="NCBIfam" id="TIGR01164">
    <property type="entry name" value="rplP_bact"/>
    <property type="match status" value="1"/>
</dbReference>
<dbReference type="PANTHER" id="PTHR12220">
    <property type="entry name" value="50S/60S RIBOSOMAL PROTEIN L16"/>
    <property type="match status" value="1"/>
</dbReference>
<dbReference type="PANTHER" id="PTHR12220:SF13">
    <property type="entry name" value="LARGE RIBOSOMAL SUBUNIT PROTEIN UL16M"/>
    <property type="match status" value="1"/>
</dbReference>
<dbReference type="Pfam" id="PF00252">
    <property type="entry name" value="Ribosomal_L16"/>
    <property type="match status" value="1"/>
</dbReference>
<dbReference type="PRINTS" id="PR00060">
    <property type="entry name" value="RIBOSOMALL16"/>
</dbReference>
<dbReference type="SUPFAM" id="SSF54686">
    <property type="entry name" value="Ribosomal protein L16p/L10e"/>
    <property type="match status" value="1"/>
</dbReference>
<dbReference type="PROSITE" id="PS00586">
    <property type="entry name" value="RIBOSOMAL_L16_1"/>
    <property type="match status" value="1"/>
</dbReference>
<dbReference type="PROSITE" id="PS00701">
    <property type="entry name" value="RIBOSOMAL_L16_2"/>
    <property type="match status" value="1"/>
</dbReference>
<keyword id="KW-0687">Ribonucleoprotein</keyword>
<keyword id="KW-0689">Ribosomal protein</keyword>
<keyword id="KW-0694">RNA-binding</keyword>
<keyword id="KW-0699">rRNA-binding</keyword>
<keyword id="KW-0820">tRNA-binding</keyword>
<gene>
    <name evidence="1" type="primary">rplP</name>
    <name evidence="1" type="synonym">rpl16</name>
    <name type="ordered locus">A9601_17581</name>
</gene>
<evidence type="ECO:0000255" key="1">
    <source>
        <dbReference type="HAMAP-Rule" id="MF_01342"/>
    </source>
</evidence>
<evidence type="ECO:0000256" key="2">
    <source>
        <dbReference type="SAM" id="MobiDB-lite"/>
    </source>
</evidence>
<evidence type="ECO:0000305" key="3"/>
<reference key="1">
    <citation type="journal article" date="2007" name="PLoS Genet.">
        <title>Patterns and implications of gene gain and loss in the evolution of Prochlorococcus.</title>
        <authorList>
            <person name="Kettler G.C."/>
            <person name="Martiny A.C."/>
            <person name="Huang K."/>
            <person name="Zucker J."/>
            <person name="Coleman M.L."/>
            <person name="Rodrigue S."/>
            <person name="Chen F."/>
            <person name="Lapidus A."/>
            <person name="Ferriera S."/>
            <person name="Johnson J."/>
            <person name="Steglich C."/>
            <person name="Church G.M."/>
            <person name="Richardson P."/>
            <person name="Chisholm S.W."/>
        </authorList>
    </citation>
    <scope>NUCLEOTIDE SEQUENCE [LARGE SCALE GENOMIC DNA]</scope>
    <source>
        <strain>AS9601</strain>
    </source>
</reference>
<accession>A2BTD0</accession>
<feature type="chain" id="PRO_1000054678" description="Large ribosomal subunit protein uL16">
    <location>
        <begin position="1"/>
        <end position="160"/>
    </location>
</feature>
<feature type="region of interest" description="Disordered" evidence="2">
    <location>
        <begin position="138"/>
        <end position="160"/>
    </location>
</feature>
<feature type="compositionally biased region" description="Basic and acidic residues" evidence="2">
    <location>
        <begin position="147"/>
        <end position="160"/>
    </location>
</feature>
<comment type="function">
    <text evidence="1">Binds 23S rRNA and is also seen to make contacts with the A and possibly P site tRNAs.</text>
</comment>
<comment type="subunit">
    <text evidence="1">Part of the 50S ribosomal subunit.</text>
</comment>
<comment type="similarity">
    <text evidence="1">Belongs to the universal ribosomal protein uL16 family.</text>
</comment>
<organism>
    <name type="scientific">Prochlorococcus marinus (strain AS9601)</name>
    <dbReference type="NCBI Taxonomy" id="146891"/>
    <lineage>
        <taxon>Bacteria</taxon>
        <taxon>Bacillati</taxon>
        <taxon>Cyanobacteriota</taxon>
        <taxon>Cyanophyceae</taxon>
        <taxon>Synechococcales</taxon>
        <taxon>Prochlorococcaceae</taxon>
        <taxon>Prochlorococcus</taxon>
    </lineage>
</organism>
<sequence>MLSPKRTKFRKQHRGRMRGVASKGNTIAFGQFALQAQDCGWVTARQIEASRRAMTRYIKRGGQIWIRIFPDKPVTMRPAETRMGSGKGNPEFWVAVVKPGRILFEMGGEDITEETAKEAMRLAQYKLPVKTKFISIDKNLENSSQENTKDSKKSQEEVKQ</sequence>
<name>RL16_PROMS</name>